<feature type="chain" id="PRO_0000178309" description="Small ribosomal subunit protein bS21">
    <location>
        <begin position="1"/>
        <end position="70"/>
    </location>
</feature>
<feature type="region of interest" description="Disordered" evidence="2">
    <location>
        <begin position="40"/>
        <end position="70"/>
    </location>
</feature>
<feature type="compositionally biased region" description="Basic residues" evidence="2">
    <location>
        <begin position="45"/>
        <end position="61"/>
    </location>
</feature>
<name>RS21_BORPE</name>
<dbReference type="EMBL" id="BX640417">
    <property type="protein sequence ID" value="CAE42464.1"/>
    <property type="molecule type" value="Genomic_DNA"/>
</dbReference>
<dbReference type="RefSeq" id="NP_880834.1">
    <property type="nucleotide sequence ID" value="NC_002929.2"/>
</dbReference>
<dbReference type="RefSeq" id="WP_006218592.1">
    <property type="nucleotide sequence ID" value="NZ_CP039022.1"/>
</dbReference>
<dbReference type="SMR" id="Q7VWM3"/>
<dbReference type="STRING" id="257313.BP2186"/>
<dbReference type="PaxDb" id="257313-BP2186"/>
<dbReference type="GeneID" id="94357011"/>
<dbReference type="KEGG" id="bpe:BP2186"/>
<dbReference type="PATRIC" id="fig|257313.5.peg.2360"/>
<dbReference type="eggNOG" id="COG0828">
    <property type="taxonomic scope" value="Bacteria"/>
</dbReference>
<dbReference type="HOGENOM" id="CLU_159258_1_2_4"/>
<dbReference type="PRO" id="PR:Q7VWM3"/>
<dbReference type="Proteomes" id="UP000002676">
    <property type="component" value="Chromosome"/>
</dbReference>
<dbReference type="GO" id="GO:1990904">
    <property type="term" value="C:ribonucleoprotein complex"/>
    <property type="evidence" value="ECO:0007669"/>
    <property type="project" value="UniProtKB-KW"/>
</dbReference>
<dbReference type="GO" id="GO:0005840">
    <property type="term" value="C:ribosome"/>
    <property type="evidence" value="ECO:0007669"/>
    <property type="project" value="UniProtKB-KW"/>
</dbReference>
<dbReference type="GO" id="GO:0003735">
    <property type="term" value="F:structural constituent of ribosome"/>
    <property type="evidence" value="ECO:0007669"/>
    <property type="project" value="InterPro"/>
</dbReference>
<dbReference type="GO" id="GO:0006412">
    <property type="term" value="P:translation"/>
    <property type="evidence" value="ECO:0007669"/>
    <property type="project" value="UniProtKB-UniRule"/>
</dbReference>
<dbReference type="Gene3D" id="1.20.5.1150">
    <property type="entry name" value="Ribosomal protein S8"/>
    <property type="match status" value="1"/>
</dbReference>
<dbReference type="HAMAP" id="MF_00358">
    <property type="entry name" value="Ribosomal_bS21"/>
    <property type="match status" value="1"/>
</dbReference>
<dbReference type="InterPro" id="IPR001911">
    <property type="entry name" value="Ribosomal_bS21"/>
</dbReference>
<dbReference type="InterPro" id="IPR018278">
    <property type="entry name" value="Ribosomal_bS21_CS"/>
</dbReference>
<dbReference type="InterPro" id="IPR038380">
    <property type="entry name" value="Ribosomal_bS21_sf"/>
</dbReference>
<dbReference type="NCBIfam" id="TIGR00030">
    <property type="entry name" value="S21p"/>
    <property type="match status" value="1"/>
</dbReference>
<dbReference type="PANTHER" id="PTHR21109">
    <property type="entry name" value="MITOCHONDRIAL 28S RIBOSOMAL PROTEIN S21"/>
    <property type="match status" value="1"/>
</dbReference>
<dbReference type="PANTHER" id="PTHR21109:SF22">
    <property type="entry name" value="SMALL RIBOSOMAL SUBUNIT PROTEIN BS21"/>
    <property type="match status" value="1"/>
</dbReference>
<dbReference type="Pfam" id="PF01165">
    <property type="entry name" value="Ribosomal_S21"/>
    <property type="match status" value="1"/>
</dbReference>
<dbReference type="PRINTS" id="PR00976">
    <property type="entry name" value="RIBOSOMALS21"/>
</dbReference>
<dbReference type="PROSITE" id="PS01181">
    <property type="entry name" value="RIBOSOMAL_S21"/>
    <property type="match status" value="1"/>
</dbReference>
<proteinExistence type="inferred from homology"/>
<evidence type="ECO:0000255" key="1">
    <source>
        <dbReference type="HAMAP-Rule" id="MF_00358"/>
    </source>
</evidence>
<evidence type="ECO:0000256" key="2">
    <source>
        <dbReference type="SAM" id="MobiDB-lite"/>
    </source>
</evidence>
<evidence type="ECO:0000305" key="3"/>
<gene>
    <name evidence="1" type="primary">rpsU</name>
    <name type="ordered locus">BP2186</name>
</gene>
<sequence>MPIVRLKENEPFEAALRRFKRTIEKTGLLTELRSREFYEKPTAERKRKHAAAVKRHYKRIRSQQLPPRLY</sequence>
<keyword id="KW-1185">Reference proteome</keyword>
<keyword id="KW-0687">Ribonucleoprotein</keyword>
<keyword id="KW-0689">Ribosomal protein</keyword>
<reference key="1">
    <citation type="journal article" date="2003" name="Nat. Genet.">
        <title>Comparative analysis of the genome sequences of Bordetella pertussis, Bordetella parapertussis and Bordetella bronchiseptica.</title>
        <authorList>
            <person name="Parkhill J."/>
            <person name="Sebaihia M."/>
            <person name="Preston A."/>
            <person name="Murphy L.D."/>
            <person name="Thomson N.R."/>
            <person name="Harris D.E."/>
            <person name="Holden M.T.G."/>
            <person name="Churcher C.M."/>
            <person name="Bentley S.D."/>
            <person name="Mungall K.L."/>
            <person name="Cerdeno-Tarraga A.-M."/>
            <person name="Temple L."/>
            <person name="James K.D."/>
            <person name="Harris B."/>
            <person name="Quail M.A."/>
            <person name="Achtman M."/>
            <person name="Atkin R."/>
            <person name="Baker S."/>
            <person name="Basham D."/>
            <person name="Bason N."/>
            <person name="Cherevach I."/>
            <person name="Chillingworth T."/>
            <person name="Collins M."/>
            <person name="Cronin A."/>
            <person name="Davis P."/>
            <person name="Doggett J."/>
            <person name="Feltwell T."/>
            <person name="Goble A."/>
            <person name="Hamlin N."/>
            <person name="Hauser H."/>
            <person name="Holroyd S."/>
            <person name="Jagels K."/>
            <person name="Leather S."/>
            <person name="Moule S."/>
            <person name="Norberczak H."/>
            <person name="O'Neil S."/>
            <person name="Ormond D."/>
            <person name="Price C."/>
            <person name="Rabbinowitsch E."/>
            <person name="Rutter S."/>
            <person name="Sanders M."/>
            <person name="Saunders D."/>
            <person name="Seeger K."/>
            <person name="Sharp S."/>
            <person name="Simmonds M."/>
            <person name="Skelton J."/>
            <person name="Squares R."/>
            <person name="Squares S."/>
            <person name="Stevens K."/>
            <person name="Unwin L."/>
            <person name="Whitehead S."/>
            <person name="Barrell B.G."/>
            <person name="Maskell D.J."/>
        </authorList>
    </citation>
    <scope>NUCLEOTIDE SEQUENCE [LARGE SCALE GENOMIC DNA]</scope>
    <source>
        <strain>Tohama I / ATCC BAA-589 / NCTC 13251</strain>
    </source>
</reference>
<organism>
    <name type="scientific">Bordetella pertussis (strain Tohama I / ATCC BAA-589 / NCTC 13251)</name>
    <dbReference type="NCBI Taxonomy" id="257313"/>
    <lineage>
        <taxon>Bacteria</taxon>
        <taxon>Pseudomonadati</taxon>
        <taxon>Pseudomonadota</taxon>
        <taxon>Betaproteobacteria</taxon>
        <taxon>Burkholderiales</taxon>
        <taxon>Alcaligenaceae</taxon>
        <taxon>Bordetella</taxon>
    </lineage>
</organism>
<comment type="similarity">
    <text evidence="1">Belongs to the bacterial ribosomal protein bS21 family.</text>
</comment>
<protein>
    <recommendedName>
        <fullName evidence="1">Small ribosomal subunit protein bS21</fullName>
    </recommendedName>
    <alternativeName>
        <fullName evidence="3">30S ribosomal protein S21</fullName>
    </alternativeName>
</protein>
<accession>Q7VWM3</accession>